<organism>
    <name type="scientific">Burkholderia orbicola (strain AU 1054)</name>
    <dbReference type="NCBI Taxonomy" id="331271"/>
    <lineage>
        <taxon>Bacteria</taxon>
        <taxon>Pseudomonadati</taxon>
        <taxon>Pseudomonadota</taxon>
        <taxon>Betaproteobacteria</taxon>
        <taxon>Burkholderiales</taxon>
        <taxon>Burkholderiaceae</taxon>
        <taxon>Burkholderia</taxon>
        <taxon>Burkholderia cepacia complex</taxon>
        <taxon>Burkholderia orbicola</taxon>
    </lineage>
</organism>
<sequence>MASNNVAQFAAELKMPAGVLLEQLQAAGVQKASEDDALSETDKARLLDHLRKSHGATDGDKRKITLTRKHTSEIKQSDATGKARTIQVEVRKKRTFVKRDDVAEGADQGQAQVAEADDDAELKRREEEARREAELLEKQAQELRERQERLEREEAERRAREEAAEAERRRAEEEAATKRAAAEVAAAQQQAAAQQAAAEQEATPTQSAQDEARAAAERAAQREAAKKAEDAAREAADKARAEQEEISKRRAAAEAEARAIREMMNTPRKAVVKAVEPPKPVEPPKPAEAKGTLHKPAKPEGAQARPAVKKPAGAAAPATTQAPAGAGDRNKKPGAGKGGWQDDAAKRRGIKTRGDSSGGVDRGWRGGPKGRGRHQDSSTFQAPTEPIVREVHVPETVSVADLAHKMSIKASEVIKVMMKMGQMVTINQVLDQETAMIIVEELGHRAVAAKLDDPEALLVEGESGTDAEQLPRPPVVTVMGHVDHGKTSLLDHIRRAKVAAGEAGGITQHIGAYHVDTPRGVITFLDTPGHEAFTAMRARGAKATDIVVLVVAADDGVMPQTKEAIAHAKAGGVPIVVAINKIDKPEANPDRVKQELVAEGVVPEEYGGDSPFVPVSAKTGAGIDDLLENVLLQAEVLELKAPVEAPAKGIVIEAKLDKGKGPVATILVQSGTLNRGDIVLAGTAYGRVRAMLDENGKPTKEAGPSIPVEIQGLSEVPGAGEEVIVLPDERKAREIALFRQGKFRDVKLAKQQAAKLESMLEQMGEGEVQNLPLIIKADVQGSQEALVQSLLKLSTDEVRVQIVHSAVGGISENDVNLATASKAVIIGFNTRADAQARKLAEANGIDIRYYNIIYDAVDEVKAAMSGMLAPEKREVITGMVEVRQVFKVPKIGTVAGCMVTDGIVKRSSSVRVLRNNVVIFTGELESLKRFKDDVKEVKQGFECGMSVKNFNDVTEGDQFEVFEVTEVARTL</sequence>
<reference key="1">
    <citation type="submission" date="2006-05" db="EMBL/GenBank/DDBJ databases">
        <title>Complete sequence of chromosome 1 of Burkholderia cenocepacia AU 1054.</title>
        <authorList>
            <consortium name="US DOE Joint Genome Institute"/>
            <person name="Copeland A."/>
            <person name="Lucas S."/>
            <person name="Lapidus A."/>
            <person name="Barry K."/>
            <person name="Detter J.C."/>
            <person name="Glavina del Rio T."/>
            <person name="Hammon N."/>
            <person name="Israni S."/>
            <person name="Dalin E."/>
            <person name="Tice H."/>
            <person name="Pitluck S."/>
            <person name="Chain P."/>
            <person name="Malfatti S."/>
            <person name="Shin M."/>
            <person name="Vergez L."/>
            <person name="Schmutz J."/>
            <person name="Larimer F."/>
            <person name="Land M."/>
            <person name="Hauser L."/>
            <person name="Kyrpides N."/>
            <person name="Lykidis A."/>
            <person name="LiPuma J.J."/>
            <person name="Konstantinidis K."/>
            <person name="Tiedje J.M."/>
            <person name="Richardson P."/>
        </authorList>
    </citation>
    <scope>NUCLEOTIDE SEQUENCE [LARGE SCALE GENOMIC DNA]</scope>
    <source>
        <strain>AU 1054</strain>
    </source>
</reference>
<feature type="chain" id="PRO_1000008208" description="Translation initiation factor IF-2">
    <location>
        <begin position="1"/>
        <end position="971"/>
    </location>
</feature>
<feature type="domain" description="tr-type G">
    <location>
        <begin position="471"/>
        <end position="640"/>
    </location>
</feature>
<feature type="region of interest" description="Disordered" evidence="3">
    <location>
        <begin position="48"/>
        <end position="86"/>
    </location>
</feature>
<feature type="region of interest" description="Disordered" evidence="3">
    <location>
        <begin position="100"/>
        <end position="381"/>
    </location>
</feature>
<feature type="region of interest" description="G1" evidence="1">
    <location>
        <begin position="480"/>
        <end position="487"/>
    </location>
</feature>
<feature type="region of interest" description="G2" evidence="1">
    <location>
        <begin position="505"/>
        <end position="509"/>
    </location>
</feature>
<feature type="region of interest" description="G3" evidence="1">
    <location>
        <begin position="526"/>
        <end position="529"/>
    </location>
</feature>
<feature type="region of interest" description="G4" evidence="1">
    <location>
        <begin position="580"/>
        <end position="583"/>
    </location>
</feature>
<feature type="region of interest" description="G5" evidence="1">
    <location>
        <begin position="616"/>
        <end position="618"/>
    </location>
</feature>
<feature type="compositionally biased region" description="Basic and acidic residues" evidence="3">
    <location>
        <begin position="48"/>
        <end position="63"/>
    </location>
</feature>
<feature type="compositionally biased region" description="Low complexity" evidence="3">
    <location>
        <begin position="105"/>
        <end position="114"/>
    </location>
</feature>
<feature type="compositionally biased region" description="Basic and acidic residues" evidence="3">
    <location>
        <begin position="121"/>
        <end position="181"/>
    </location>
</feature>
<feature type="compositionally biased region" description="Low complexity" evidence="3">
    <location>
        <begin position="182"/>
        <end position="202"/>
    </location>
</feature>
<feature type="compositionally biased region" description="Basic and acidic residues" evidence="3">
    <location>
        <begin position="210"/>
        <end position="261"/>
    </location>
</feature>
<feature type="compositionally biased region" description="Pro residues" evidence="3">
    <location>
        <begin position="277"/>
        <end position="286"/>
    </location>
</feature>
<feature type="compositionally biased region" description="Low complexity" evidence="3">
    <location>
        <begin position="304"/>
        <end position="326"/>
    </location>
</feature>
<feature type="compositionally biased region" description="Gly residues" evidence="3">
    <location>
        <begin position="356"/>
        <end position="369"/>
    </location>
</feature>
<feature type="binding site" evidence="2">
    <location>
        <begin position="480"/>
        <end position="487"/>
    </location>
    <ligand>
        <name>GTP</name>
        <dbReference type="ChEBI" id="CHEBI:37565"/>
    </ligand>
</feature>
<feature type="binding site" evidence="2">
    <location>
        <begin position="526"/>
        <end position="530"/>
    </location>
    <ligand>
        <name>GTP</name>
        <dbReference type="ChEBI" id="CHEBI:37565"/>
    </ligand>
</feature>
<feature type="binding site" evidence="2">
    <location>
        <begin position="580"/>
        <end position="583"/>
    </location>
    <ligand>
        <name>GTP</name>
        <dbReference type="ChEBI" id="CHEBI:37565"/>
    </ligand>
</feature>
<comment type="function">
    <text evidence="2">One of the essential components for the initiation of protein synthesis. Protects formylmethionyl-tRNA from spontaneous hydrolysis and promotes its binding to the 30S ribosomal subunits. Also involved in the hydrolysis of GTP during the formation of the 70S ribosomal complex.</text>
</comment>
<comment type="subcellular location">
    <subcellularLocation>
        <location evidence="2">Cytoplasm</location>
    </subcellularLocation>
</comment>
<comment type="similarity">
    <text evidence="2">Belongs to the TRAFAC class translation factor GTPase superfamily. Classic translation factor GTPase family. IF-2 subfamily.</text>
</comment>
<keyword id="KW-0963">Cytoplasm</keyword>
<keyword id="KW-0342">GTP-binding</keyword>
<keyword id="KW-0396">Initiation factor</keyword>
<keyword id="KW-0547">Nucleotide-binding</keyword>
<keyword id="KW-0648">Protein biosynthesis</keyword>
<name>IF2_BURO1</name>
<dbReference type="EMBL" id="CP000378">
    <property type="protein sequence ID" value="ABF75928.1"/>
    <property type="molecule type" value="Genomic_DNA"/>
</dbReference>
<dbReference type="SMR" id="Q1BWS7"/>
<dbReference type="HOGENOM" id="CLU_006301_6_0_4"/>
<dbReference type="GO" id="GO:0005829">
    <property type="term" value="C:cytosol"/>
    <property type="evidence" value="ECO:0007669"/>
    <property type="project" value="TreeGrafter"/>
</dbReference>
<dbReference type="GO" id="GO:0005525">
    <property type="term" value="F:GTP binding"/>
    <property type="evidence" value="ECO:0007669"/>
    <property type="project" value="UniProtKB-KW"/>
</dbReference>
<dbReference type="GO" id="GO:0003924">
    <property type="term" value="F:GTPase activity"/>
    <property type="evidence" value="ECO:0007669"/>
    <property type="project" value="UniProtKB-UniRule"/>
</dbReference>
<dbReference type="GO" id="GO:0003743">
    <property type="term" value="F:translation initiation factor activity"/>
    <property type="evidence" value="ECO:0007669"/>
    <property type="project" value="UniProtKB-UniRule"/>
</dbReference>
<dbReference type="CDD" id="cd01887">
    <property type="entry name" value="IF2_eIF5B"/>
    <property type="match status" value="1"/>
</dbReference>
<dbReference type="CDD" id="cd03702">
    <property type="entry name" value="IF2_mtIF2_II"/>
    <property type="match status" value="1"/>
</dbReference>
<dbReference type="CDD" id="cd03692">
    <property type="entry name" value="mtIF2_IVc"/>
    <property type="match status" value="1"/>
</dbReference>
<dbReference type="FunFam" id="2.40.30.10:FF:000007">
    <property type="entry name" value="Translation initiation factor IF-2"/>
    <property type="match status" value="1"/>
</dbReference>
<dbReference type="FunFam" id="2.40.30.10:FF:000008">
    <property type="entry name" value="Translation initiation factor IF-2"/>
    <property type="match status" value="1"/>
</dbReference>
<dbReference type="FunFam" id="3.40.50.10050:FF:000001">
    <property type="entry name" value="Translation initiation factor IF-2"/>
    <property type="match status" value="1"/>
</dbReference>
<dbReference type="FunFam" id="3.40.50.300:FF:000019">
    <property type="entry name" value="Translation initiation factor IF-2"/>
    <property type="match status" value="1"/>
</dbReference>
<dbReference type="Gene3D" id="3.40.50.300">
    <property type="entry name" value="P-loop containing nucleotide triphosphate hydrolases"/>
    <property type="match status" value="1"/>
</dbReference>
<dbReference type="Gene3D" id="3.30.56.50">
    <property type="entry name" value="Putative DNA-binding domain, N-terminal subdomain of bacterial translation initiation factor IF2"/>
    <property type="match status" value="1"/>
</dbReference>
<dbReference type="Gene3D" id="2.40.30.10">
    <property type="entry name" value="Translation factors"/>
    <property type="match status" value="2"/>
</dbReference>
<dbReference type="Gene3D" id="3.40.50.10050">
    <property type="entry name" value="Translation initiation factor IF- 2, domain 3"/>
    <property type="match status" value="1"/>
</dbReference>
<dbReference type="HAMAP" id="MF_00100_B">
    <property type="entry name" value="IF_2_B"/>
    <property type="match status" value="1"/>
</dbReference>
<dbReference type="InterPro" id="IPR009061">
    <property type="entry name" value="DNA-bd_dom_put_sf"/>
</dbReference>
<dbReference type="InterPro" id="IPR053905">
    <property type="entry name" value="EF-G-like_DII"/>
</dbReference>
<dbReference type="InterPro" id="IPR013575">
    <property type="entry name" value="IF2_assoc_dom_bac"/>
</dbReference>
<dbReference type="InterPro" id="IPR044145">
    <property type="entry name" value="IF2_II"/>
</dbReference>
<dbReference type="InterPro" id="IPR006847">
    <property type="entry name" value="IF2_N"/>
</dbReference>
<dbReference type="InterPro" id="IPR027417">
    <property type="entry name" value="P-loop_NTPase"/>
</dbReference>
<dbReference type="InterPro" id="IPR005225">
    <property type="entry name" value="Small_GTP-bd"/>
</dbReference>
<dbReference type="InterPro" id="IPR000795">
    <property type="entry name" value="T_Tr_GTP-bd_dom"/>
</dbReference>
<dbReference type="InterPro" id="IPR000178">
    <property type="entry name" value="TF_IF2_bacterial-like"/>
</dbReference>
<dbReference type="InterPro" id="IPR015760">
    <property type="entry name" value="TIF_IF2"/>
</dbReference>
<dbReference type="InterPro" id="IPR023115">
    <property type="entry name" value="TIF_IF2_dom3"/>
</dbReference>
<dbReference type="InterPro" id="IPR036925">
    <property type="entry name" value="TIF_IF2_dom3_sf"/>
</dbReference>
<dbReference type="InterPro" id="IPR009000">
    <property type="entry name" value="Transl_B-barrel_sf"/>
</dbReference>
<dbReference type="NCBIfam" id="TIGR00487">
    <property type="entry name" value="IF-2"/>
    <property type="match status" value="1"/>
</dbReference>
<dbReference type="NCBIfam" id="TIGR00231">
    <property type="entry name" value="small_GTP"/>
    <property type="match status" value="1"/>
</dbReference>
<dbReference type="PANTHER" id="PTHR43381:SF5">
    <property type="entry name" value="TR-TYPE G DOMAIN-CONTAINING PROTEIN"/>
    <property type="match status" value="1"/>
</dbReference>
<dbReference type="PANTHER" id="PTHR43381">
    <property type="entry name" value="TRANSLATION INITIATION FACTOR IF-2-RELATED"/>
    <property type="match status" value="1"/>
</dbReference>
<dbReference type="Pfam" id="PF22042">
    <property type="entry name" value="EF-G_D2"/>
    <property type="match status" value="1"/>
</dbReference>
<dbReference type="Pfam" id="PF00009">
    <property type="entry name" value="GTP_EFTU"/>
    <property type="match status" value="1"/>
</dbReference>
<dbReference type="Pfam" id="PF11987">
    <property type="entry name" value="IF-2"/>
    <property type="match status" value="1"/>
</dbReference>
<dbReference type="Pfam" id="PF08364">
    <property type="entry name" value="IF2_assoc"/>
    <property type="match status" value="1"/>
</dbReference>
<dbReference type="Pfam" id="PF04760">
    <property type="entry name" value="IF2_N"/>
    <property type="match status" value="2"/>
</dbReference>
<dbReference type="SUPFAM" id="SSF52156">
    <property type="entry name" value="Initiation factor IF2/eIF5b, domain 3"/>
    <property type="match status" value="1"/>
</dbReference>
<dbReference type="SUPFAM" id="SSF52540">
    <property type="entry name" value="P-loop containing nucleoside triphosphate hydrolases"/>
    <property type="match status" value="1"/>
</dbReference>
<dbReference type="SUPFAM" id="SSF46955">
    <property type="entry name" value="Putative DNA-binding domain"/>
    <property type="match status" value="1"/>
</dbReference>
<dbReference type="SUPFAM" id="SSF50447">
    <property type="entry name" value="Translation proteins"/>
    <property type="match status" value="2"/>
</dbReference>
<dbReference type="PROSITE" id="PS51722">
    <property type="entry name" value="G_TR_2"/>
    <property type="match status" value="1"/>
</dbReference>
<dbReference type="PROSITE" id="PS01176">
    <property type="entry name" value="IF2"/>
    <property type="match status" value="1"/>
</dbReference>
<proteinExistence type="inferred from homology"/>
<evidence type="ECO:0000250" key="1"/>
<evidence type="ECO:0000255" key="2">
    <source>
        <dbReference type="HAMAP-Rule" id="MF_00100"/>
    </source>
</evidence>
<evidence type="ECO:0000256" key="3">
    <source>
        <dbReference type="SAM" id="MobiDB-lite"/>
    </source>
</evidence>
<protein>
    <recommendedName>
        <fullName evidence="2">Translation initiation factor IF-2</fullName>
    </recommendedName>
</protein>
<accession>Q1BWS7</accession>
<gene>
    <name evidence="2" type="primary">infB</name>
    <name type="ordered locus">Bcen_1020</name>
</gene>